<keyword id="KW-0028">Amino-acid biosynthesis</keyword>
<keyword id="KW-0170">Cobalt</keyword>
<keyword id="KW-0220">Diaminopimelate biosynthesis</keyword>
<keyword id="KW-0378">Hydrolase</keyword>
<keyword id="KW-0457">Lysine biosynthesis</keyword>
<keyword id="KW-0479">Metal-binding</keyword>
<keyword id="KW-1185">Reference proteome</keyword>
<keyword id="KW-0862">Zinc</keyword>
<gene>
    <name evidence="1" type="primary">dapE</name>
    <name type="ordered locus">OTBS_0555</name>
</gene>
<sequence length="388" mass="44286">MISKKLIIELLKQLISFKSVTPNDNGAIDFITNLLVKQGFKVYVKEFGQEYKVKNLYGYFGNGQPNICFAGHIDVVPAGFIEQWKYPPFCATQYKDKIYGRGVVDMKGAISAMLSSVFCFIDNNHDFNGTISFLITADEEGEALFGTKKMLEWIYRQGHKIDFTILGEPTCTDKIGDTIKIGRRGSINFDLKVFGKQGHVAYPHLAINPNHLIVKILNRLIAYKIDEGNEFFAPSNLEIVSIDTNNNITNIIPEIAKSKFNIRFNDIHTNERLLEIVKKTIEQFTTNYDLQSSCRSRPFLAKMSPYIFSFKELVHKVTKIKPEFSTSGGTSDAYFFKDYSPIVEFGLLNTMAHKINEYCLINDLQTLCRVYYNALCLFLMSNSKFRTN</sequence>
<protein>
    <recommendedName>
        <fullName evidence="1">Succinyl-diaminopimelate desuccinylase</fullName>
        <shortName evidence="1">SDAP desuccinylase</shortName>
        <ecNumber evidence="1">3.5.1.18</ecNumber>
    </recommendedName>
    <alternativeName>
        <fullName evidence="1">N-succinyl-LL-2,6-diaminoheptanedioate amidohydrolase</fullName>
    </alternativeName>
</protein>
<organism>
    <name type="scientific">Orientia tsutsugamushi (strain Boryong)</name>
    <name type="common">Rickettsia tsutsugamushi</name>
    <dbReference type="NCBI Taxonomy" id="357244"/>
    <lineage>
        <taxon>Bacteria</taxon>
        <taxon>Pseudomonadati</taxon>
        <taxon>Pseudomonadota</taxon>
        <taxon>Alphaproteobacteria</taxon>
        <taxon>Rickettsiales</taxon>
        <taxon>Rickettsiaceae</taxon>
        <taxon>Rickettsieae</taxon>
        <taxon>Orientia</taxon>
    </lineage>
</organism>
<comment type="function">
    <text evidence="1">Catalyzes the hydrolysis of N-succinyl-L,L-diaminopimelic acid (SDAP), forming succinate and LL-2,6-diaminopimelate (DAP), an intermediate involved in the bacterial biosynthesis of lysine and meso-diaminopimelic acid, an essential component of bacterial cell walls.</text>
</comment>
<comment type="catalytic activity">
    <reaction evidence="1">
        <text>N-succinyl-(2S,6S)-2,6-diaminopimelate + H2O = (2S,6S)-2,6-diaminopimelate + succinate</text>
        <dbReference type="Rhea" id="RHEA:22608"/>
        <dbReference type="ChEBI" id="CHEBI:15377"/>
        <dbReference type="ChEBI" id="CHEBI:30031"/>
        <dbReference type="ChEBI" id="CHEBI:57609"/>
        <dbReference type="ChEBI" id="CHEBI:58087"/>
        <dbReference type="EC" id="3.5.1.18"/>
    </reaction>
</comment>
<comment type="cofactor">
    <cofactor evidence="1">
        <name>Zn(2+)</name>
        <dbReference type="ChEBI" id="CHEBI:29105"/>
    </cofactor>
    <cofactor evidence="1">
        <name>Co(2+)</name>
        <dbReference type="ChEBI" id="CHEBI:48828"/>
    </cofactor>
    <text evidence="1">Binds 2 Zn(2+) or Co(2+) ions per subunit.</text>
</comment>
<comment type="pathway">
    <text evidence="1">Amino-acid biosynthesis; L-lysine biosynthesis via DAP pathway; LL-2,6-diaminopimelate from (S)-tetrahydrodipicolinate (succinylase route): step 3/3.</text>
</comment>
<comment type="subunit">
    <text evidence="1">Homodimer.</text>
</comment>
<comment type="similarity">
    <text evidence="1">Belongs to the peptidase M20A family. DapE subfamily.</text>
</comment>
<accession>A5CCZ1</accession>
<proteinExistence type="inferred from homology"/>
<dbReference type="EC" id="3.5.1.18" evidence="1"/>
<dbReference type="EMBL" id="AM494475">
    <property type="protein sequence ID" value="CAM79621.1"/>
    <property type="molecule type" value="Genomic_DNA"/>
</dbReference>
<dbReference type="RefSeq" id="WP_011944541.1">
    <property type="nucleotide sequence ID" value="NC_009488.1"/>
</dbReference>
<dbReference type="SMR" id="A5CCZ1"/>
<dbReference type="KEGG" id="ots:OTBS_0555"/>
<dbReference type="eggNOG" id="COG0624">
    <property type="taxonomic scope" value="Bacteria"/>
</dbReference>
<dbReference type="HOGENOM" id="CLU_021802_4_0_5"/>
<dbReference type="UniPathway" id="UPA00034">
    <property type="reaction ID" value="UER00021"/>
</dbReference>
<dbReference type="Proteomes" id="UP000001565">
    <property type="component" value="Chromosome"/>
</dbReference>
<dbReference type="GO" id="GO:0008777">
    <property type="term" value="F:acetylornithine deacetylase activity"/>
    <property type="evidence" value="ECO:0007669"/>
    <property type="project" value="TreeGrafter"/>
</dbReference>
<dbReference type="GO" id="GO:0050897">
    <property type="term" value="F:cobalt ion binding"/>
    <property type="evidence" value="ECO:0007669"/>
    <property type="project" value="UniProtKB-UniRule"/>
</dbReference>
<dbReference type="GO" id="GO:0009014">
    <property type="term" value="F:succinyl-diaminopimelate desuccinylase activity"/>
    <property type="evidence" value="ECO:0007669"/>
    <property type="project" value="UniProtKB-UniRule"/>
</dbReference>
<dbReference type="GO" id="GO:0008270">
    <property type="term" value="F:zinc ion binding"/>
    <property type="evidence" value="ECO:0007669"/>
    <property type="project" value="UniProtKB-UniRule"/>
</dbReference>
<dbReference type="GO" id="GO:0019877">
    <property type="term" value="P:diaminopimelate biosynthetic process"/>
    <property type="evidence" value="ECO:0007669"/>
    <property type="project" value="UniProtKB-UniRule"/>
</dbReference>
<dbReference type="GO" id="GO:0006526">
    <property type="term" value="P:L-arginine biosynthetic process"/>
    <property type="evidence" value="ECO:0007669"/>
    <property type="project" value="TreeGrafter"/>
</dbReference>
<dbReference type="GO" id="GO:0009089">
    <property type="term" value="P:lysine biosynthetic process via diaminopimelate"/>
    <property type="evidence" value="ECO:0007669"/>
    <property type="project" value="UniProtKB-UniRule"/>
</dbReference>
<dbReference type="CDD" id="cd03891">
    <property type="entry name" value="M20_DapE_proteobac"/>
    <property type="match status" value="1"/>
</dbReference>
<dbReference type="Gene3D" id="3.30.70.360">
    <property type="match status" value="1"/>
</dbReference>
<dbReference type="Gene3D" id="3.40.630.10">
    <property type="entry name" value="Zn peptidases"/>
    <property type="match status" value="2"/>
</dbReference>
<dbReference type="HAMAP" id="MF_01690">
    <property type="entry name" value="DapE"/>
    <property type="match status" value="1"/>
</dbReference>
<dbReference type="InterPro" id="IPR036264">
    <property type="entry name" value="Bact_exopeptidase_dim_dom"/>
</dbReference>
<dbReference type="InterPro" id="IPR005941">
    <property type="entry name" value="DapE_proteobac"/>
</dbReference>
<dbReference type="InterPro" id="IPR002933">
    <property type="entry name" value="Peptidase_M20"/>
</dbReference>
<dbReference type="InterPro" id="IPR011650">
    <property type="entry name" value="Peptidase_M20_dimer"/>
</dbReference>
<dbReference type="InterPro" id="IPR050072">
    <property type="entry name" value="Peptidase_M20A"/>
</dbReference>
<dbReference type="NCBIfam" id="TIGR01246">
    <property type="entry name" value="dapE_proteo"/>
    <property type="match status" value="1"/>
</dbReference>
<dbReference type="NCBIfam" id="NF009557">
    <property type="entry name" value="PRK13009.1"/>
    <property type="match status" value="1"/>
</dbReference>
<dbReference type="PANTHER" id="PTHR43808">
    <property type="entry name" value="ACETYLORNITHINE DEACETYLASE"/>
    <property type="match status" value="1"/>
</dbReference>
<dbReference type="PANTHER" id="PTHR43808:SF31">
    <property type="entry name" value="N-ACETYL-L-CITRULLINE DEACETYLASE"/>
    <property type="match status" value="1"/>
</dbReference>
<dbReference type="Pfam" id="PF07687">
    <property type="entry name" value="M20_dimer"/>
    <property type="match status" value="1"/>
</dbReference>
<dbReference type="Pfam" id="PF01546">
    <property type="entry name" value="Peptidase_M20"/>
    <property type="match status" value="1"/>
</dbReference>
<dbReference type="SUPFAM" id="SSF55031">
    <property type="entry name" value="Bacterial exopeptidase dimerisation domain"/>
    <property type="match status" value="1"/>
</dbReference>
<dbReference type="SUPFAM" id="SSF53187">
    <property type="entry name" value="Zn-dependent exopeptidases"/>
    <property type="match status" value="1"/>
</dbReference>
<evidence type="ECO:0000255" key="1">
    <source>
        <dbReference type="HAMAP-Rule" id="MF_01690"/>
    </source>
</evidence>
<feature type="chain" id="PRO_0000375637" description="Succinyl-diaminopimelate desuccinylase">
    <location>
        <begin position="1"/>
        <end position="388"/>
    </location>
</feature>
<feature type="active site" evidence="1">
    <location>
        <position position="74"/>
    </location>
</feature>
<feature type="active site" description="Proton acceptor" evidence="1">
    <location>
        <position position="139"/>
    </location>
</feature>
<feature type="binding site" evidence="1">
    <location>
        <position position="72"/>
    </location>
    <ligand>
        <name>Zn(2+)</name>
        <dbReference type="ChEBI" id="CHEBI:29105"/>
        <label>1</label>
    </ligand>
</feature>
<feature type="binding site" evidence="1">
    <location>
        <position position="105"/>
    </location>
    <ligand>
        <name>Zn(2+)</name>
        <dbReference type="ChEBI" id="CHEBI:29105"/>
        <label>1</label>
    </ligand>
</feature>
<feature type="binding site" evidence="1">
    <location>
        <position position="105"/>
    </location>
    <ligand>
        <name>Zn(2+)</name>
        <dbReference type="ChEBI" id="CHEBI:29105"/>
        <label>2</label>
    </ligand>
</feature>
<feature type="binding site" evidence="1">
    <location>
        <position position="140"/>
    </location>
    <ligand>
        <name>Zn(2+)</name>
        <dbReference type="ChEBI" id="CHEBI:29105"/>
        <label>2</label>
    </ligand>
</feature>
<feature type="binding site" evidence="1">
    <location>
        <position position="168"/>
    </location>
    <ligand>
        <name>Zn(2+)</name>
        <dbReference type="ChEBI" id="CHEBI:29105"/>
        <label>1</label>
    </ligand>
</feature>
<feature type="binding site" evidence="1">
    <location>
        <position position="353"/>
    </location>
    <ligand>
        <name>Zn(2+)</name>
        <dbReference type="ChEBI" id="CHEBI:29105"/>
        <label>2</label>
    </ligand>
</feature>
<reference key="1">
    <citation type="journal article" date="2007" name="Proc. Natl. Acad. Sci. U.S.A.">
        <title>The Orientia tsutsugamushi genome reveals massive proliferation of conjugative type IV secretion system and host-cell interaction genes.</title>
        <authorList>
            <person name="Cho N.-H."/>
            <person name="Kim H.-R."/>
            <person name="Lee J.-H."/>
            <person name="Kim S.-Y."/>
            <person name="Kim J."/>
            <person name="Cha S."/>
            <person name="Kim S.-Y."/>
            <person name="Darby A.C."/>
            <person name="Fuxelius H.-H."/>
            <person name="Yin J."/>
            <person name="Kim J.H."/>
            <person name="Kim J."/>
            <person name="Lee S.J."/>
            <person name="Koh Y.-S."/>
            <person name="Jang W.-J."/>
            <person name="Park K.-H."/>
            <person name="Andersson S.G.E."/>
            <person name="Choi M.-S."/>
            <person name="Kim I.-S."/>
        </authorList>
    </citation>
    <scope>NUCLEOTIDE SEQUENCE [LARGE SCALE GENOMIC DNA]</scope>
    <source>
        <strain>Boryong</strain>
    </source>
</reference>
<name>DAPE_ORITB</name>